<keyword id="KW-0028">Amino-acid biosynthesis</keyword>
<keyword id="KW-0067">ATP-binding</keyword>
<keyword id="KW-0963">Cytoplasm</keyword>
<keyword id="KW-0328">Glycosyltransferase</keyword>
<keyword id="KW-0368">Histidine biosynthesis</keyword>
<keyword id="KW-0547">Nucleotide-binding</keyword>
<keyword id="KW-0808">Transferase</keyword>
<sequence length="204" mass="22643">MLRIAIAKGRLMDSLINYLDVIEYTTLSETLKNRERQLLLSVDNIECILVKGSDVPIYVEQGMADIGIVGSDILDERQYNVNNLLNMPFGACHFAVAAKPETTNYRKIATSYVHTAETYFKSKGIDVELIKLNGSVELACVVDMVDGIVDIVQTGTTLKANGLVEKQHISDINARLITNKAAYFKKSQLIEQFIRSLEVSIANA</sequence>
<name>HIS1_STAAN</name>
<dbReference type="EC" id="2.4.2.17"/>
<dbReference type="EMBL" id="BA000018">
    <property type="protein sequence ID" value="BAB43777.1"/>
    <property type="molecule type" value="Genomic_DNA"/>
</dbReference>
<dbReference type="PIR" id="G90076">
    <property type="entry name" value="G90076"/>
</dbReference>
<dbReference type="RefSeq" id="WP_000944149.1">
    <property type="nucleotide sequence ID" value="NC_002745.2"/>
</dbReference>
<dbReference type="SMR" id="P64349"/>
<dbReference type="EnsemblBacteria" id="BAB43777">
    <property type="protein sequence ID" value="BAB43777"/>
    <property type="gene ID" value="BAB43777"/>
</dbReference>
<dbReference type="KEGG" id="sau:SA2471"/>
<dbReference type="HOGENOM" id="CLU_038115_2_0_9"/>
<dbReference type="UniPathway" id="UPA00031">
    <property type="reaction ID" value="UER00006"/>
</dbReference>
<dbReference type="GO" id="GO:0005737">
    <property type="term" value="C:cytoplasm"/>
    <property type="evidence" value="ECO:0007669"/>
    <property type="project" value="UniProtKB-SubCell"/>
</dbReference>
<dbReference type="GO" id="GO:0005524">
    <property type="term" value="F:ATP binding"/>
    <property type="evidence" value="ECO:0007669"/>
    <property type="project" value="UniProtKB-KW"/>
</dbReference>
<dbReference type="GO" id="GO:0003879">
    <property type="term" value="F:ATP phosphoribosyltransferase activity"/>
    <property type="evidence" value="ECO:0007669"/>
    <property type="project" value="UniProtKB-UniRule"/>
</dbReference>
<dbReference type="GO" id="GO:0000105">
    <property type="term" value="P:L-histidine biosynthetic process"/>
    <property type="evidence" value="ECO:0007669"/>
    <property type="project" value="UniProtKB-UniRule"/>
</dbReference>
<dbReference type="CDD" id="cd13595">
    <property type="entry name" value="PBP2_HisGs"/>
    <property type="match status" value="1"/>
</dbReference>
<dbReference type="FunFam" id="3.40.190.10:FF:000008">
    <property type="entry name" value="ATP phosphoribosyltransferase"/>
    <property type="match status" value="1"/>
</dbReference>
<dbReference type="Gene3D" id="3.40.190.10">
    <property type="entry name" value="Periplasmic binding protein-like II"/>
    <property type="match status" value="2"/>
</dbReference>
<dbReference type="HAMAP" id="MF_01018">
    <property type="entry name" value="HisG_Short"/>
    <property type="match status" value="1"/>
</dbReference>
<dbReference type="InterPro" id="IPR013820">
    <property type="entry name" value="ATP_PRibTrfase_cat"/>
</dbReference>
<dbReference type="InterPro" id="IPR001348">
    <property type="entry name" value="ATP_PRibTrfase_HisG"/>
</dbReference>
<dbReference type="InterPro" id="IPR024893">
    <property type="entry name" value="ATP_PRibTrfase_HisG_short"/>
</dbReference>
<dbReference type="NCBIfam" id="TIGR00070">
    <property type="entry name" value="hisG"/>
    <property type="match status" value="1"/>
</dbReference>
<dbReference type="PANTHER" id="PTHR21403:SF8">
    <property type="entry name" value="ATP PHOSPHORIBOSYLTRANSFERASE"/>
    <property type="match status" value="1"/>
</dbReference>
<dbReference type="PANTHER" id="PTHR21403">
    <property type="entry name" value="ATP PHOSPHORIBOSYLTRANSFERASE ATP-PRTASE"/>
    <property type="match status" value="1"/>
</dbReference>
<dbReference type="Pfam" id="PF01634">
    <property type="entry name" value="HisG"/>
    <property type="match status" value="1"/>
</dbReference>
<dbReference type="SUPFAM" id="SSF53850">
    <property type="entry name" value="Periplasmic binding protein-like II"/>
    <property type="match status" value="1"/>
</dbReference>
<evidence type="ECO:0000250" key="1"/>
<evidence type="ECO:0000305" key="2"/>
<accession>P64349</accession>
<accession>Q99QW2</accession>
<reference key="1">
    <citation type="journal article" date="2001" name="Lancet">
        <title>Whole genome sequencing of meticillin-resistant Staphylococcus aureus.</title>
        <authorList>
            <person name="Kuroda M."/>
            <person name="Ohta T."/>
            <person name="Uchiyama I."/>
            <person name="Baba T."/>
            <person name="Yuzawa H."/>
            <person name="Kobayashi I."/>
            <person name="Cui L."/>
            <person name="Oguchi A."/>
            <person name="Aoki K."/>
            <person name="Nagai Y."/>
            <person name="Lian J.-Q."/>
            <person name="Ito T."/>
            <person name="Kanamori M."/>
            <person name="Matsumaru H."/>
            <person name="Maruyama A."/>
            <person name="Murakami H."/>
            <person name="Hosoyama A."/>
            <person name="Mizutani-Ui Y."/>
            <person name="Takahashi N.K."/>
            <person name="Sawano T."/>
            <person name="Inoue R."/>
            <person name="Kaito C."/>
            <person name="Sekimizu K."/>
            <person name="Hirakawa H."/>
            <person name="Kuhara S."/>
            <person name="Goto S."/>
            <person name="Yabuzaki J."/>
            <person name="Kanehisa M."/>
            <person name="Yamashita A."/>
            <person name="Oshima K."/>
            <person name="Furuya K."/>
            <person name="Yoshino C."/>
            <person name="Shiba T."/>
            <person name="Hattori M."/>
            <person name="Ogasawara N."/>
            <person name="Hayashi H."/>
            <person name="Hiramatsu K."/>
        </authorList>
    </citation>
    <scope>NUCLEOTIDE SEQUENCE [LARGE SCALE GENOMIC DNA]</scope>
    <source>
        <strain>N315</strain>
    </source>
</reference>
<feature type="chain" id="PRO_0000151933" description="ATP phosphoribosyltransferase">
    <location>
        <begin position="1"/>
        <end position="204"/>
    </location>
</feature>
<gene>
    <name type="primary">hisG</name>
    <name type="ordered locus">SA2471</name>
</gene>
<protein>
    <recommendedName>
        <fullName>ATP phosphoribosyltransferase</fullName>
        <shortName>ATP-PRT</shortName>
        <shortName>ATP-PRTase</shortName>
        <ecNumber>2.4.2.17</ecNumber>
    </recommendedName>
</protein>
<comment type="function">
    <text evidence="1">Catalyzes the condensation of ATP and 5-phosphoribose 1-diphosphate to form N'-(5'-phosphoribosyl)-ATP (PR-ATP). Has a crucial role in the pathway because the rate of histidine biosynthesis seems to be controlled primarily by regulation of HisG enzymatic activity (By similarity).</text>
</comment>
<comment type="catalytic activity">
    <reaction>
        <text>1-(5-phospho-beta-D-ribosyl)-ATP + diphosphate = 5-phospho-alpha-D-ribose 1-diphosphate + ATP</text>
        <dbReference type="Rhea" id="RHEA:18473"/>
        <dbReference type="ChEBI" id="CHEBI:30616"/>
        <dbReference type="ChEBI" id="CHEBI:33019"/>
        <dbReference type="ChEBI" id="CHEBI:58017"/>
        <dbReference type="ChEBI" id="CHEBI:73183"/>
        <dbReference type="EC" id="2.4.2.17"/>
    </reaction>
</comment>
<comment type="pathway">
    <text>Amino-acid biosynthesis; L-histidine biosynthesis; L-histidine from 5-phospho-alpha-D-ribose 1-diphosphate: step 1/9.</text>
</comment>
<comment type="subunit">
    <text evidence="1">Heteromultimer composed of HisG and HisZ subunits.</text>
</comment>
<comment type="subcellular location">
    <subcellularLocation>
        <location evidence="1">Cytoplasm</location>
    </subcellularLocation>
</comment>
<comment type="domain">
    <text>Lacks the C-terminal regulatory region which is replaced by HisZ.</text>
</comment>
<comment type="similarity">
    <text evidence="2">Belongs to the ATP phosphoribosyltransferase family. Short subfamily.</text>
</comment>
<organism>
    <name type="scientific">Staphylococcus aureus (strain N315)</name>
    <dbReference type="NCBI Taxonomy" id="158879"/>
    <lineage>
        <taxon>Bacteria</taxon>
        <taxon>Bacillati</taxon>
        <taxon>Bacillota</taxon>
        <taxon>Bacilli</taxon>
        <taxon>Bacillales</taxon>
        <taxon>Staphylococcaceae</taxon>
        <taxon>Staphylococcus</taxon>
    </lineage>
</organism>
<proteinExistence type="inferred from homology"/>